<comment type="similarity">
    <text evidence="1">Belongs to the UPF0352 family.</text>
</comment>
<gene>
    <name evidence="1" type="primary">yejL</name>
    <name type="ordered locus">SeAg_B2376</name>
</gene>
<organism>
    <name type="scientific">Salmonella agona (strain SL483)</name>
    <dbReference type="NCBI Taxonomy" id="454166"/>
    <lineage>
        <taxon>Bacteria</taxon>
        <taxon>Pseudomonadati</taxon>
        <taxon>Pseudomonadota</taxon>
        <taxon>Gammaproteobacteria</taxon>
        <taxon>Enterobacterales</taxon>
        <taxon>Enterobacteriaceae</taxon>
        <taxon>Salmonella</taxon>
    </lineage>
</organism>
<protein>
    <recommendedName>
        <fullName evidence="1">UPF0352 protein YejL</fullName>
    </recommendedName>
</protein>
<name>YEJL_SALA4</name>
<reference key="1">
    <citation type="journal article" date="2011" name="J. Bacteriol.">
        <title>Comparative genomics of 28 Salmonella enterica isolates: evidence for CRISPR-mediated adaptive sublineage evolution.</title>
        <authorList>
            <person name="Fricke W.F."/>
            <person name="Mammel M.K."/>
            <person name="McDermott P.F."/>
            <person name="Tartera C."/>
            <person name="White D.G."/>
            <person name="Leclerc J.E."/>
            <person name="Ravel J."/>
            <person name="Cebula T.A."/>
        </authorList>
    </citation>
    <scope>NUCLEOTIDE SEQUENCE [LARGE SCALE GENOMIC DNA]</scope>
    <source>
        <strain>SL483</strain>
    </source>
</reference>
<accession>B5EYS9</accession>
<proteinExistence type="inferred from homology"/>
<feature type="chain" id="PRO_1000199593" description="UPF0352 protein YejL">
    <location>
        <begin position="1"/>
        <end position="75"/>
    </location>
</feature>
<dbReference type="EMBL" id="CP001138">
    <property type="protein sequence ID" value="ACH49193.1"/>
    <property type="molecule type" value="Genomic_DNA"/>
</dbReference>
<dbReference type="RefSeq" id="WP_001135904.1">
    <property type="nucleotide sequence ID" value="NC_011149.1"/>
</dbReference>
<dbReference type="SMR" id="B5EYS9"/>
<dbReference type="KEGG" id="sea:SeAg_B2376"/>
<dbReference type="HOGENOM" id="CLU_175457_0_0_6"/>
<dbReference type="Proteomes" id="UP000008819">
    <property type="component" value="Chromosome"/>
</dbReference>
<dbReference type="Gene3D" id="1.10.3390.10">
    <property type="entry name" value="YejL-like"/>
    <property type="match status" value="1"/>
</dbReference>
<dbReference type="HAMAP" id="MF_00816">
    <property type="entry name" value="UPF0352"/>
    <property type="match status" value="1"/>
</dbReference>
<dbReference type="InterPro" id="IPR009857">
    <property type="entry name" value="UPF0352"/>
</dbReference>
<dbReference type="InterPro" id="IPR023202">
    <property type="entry name" value="YejL_sf"/>
</dbReference>
<dbReference type="NCBIfam" id="NF010242">
    <property type="entry name" value="PRK13689.1"/>
    <property type="match status" value="1"/>
</dbReference>
<dbReference type="Pfam" id="PF07208">
    <property type="entry name" value="DUF1414"/>
    <property type="match status" value="1"/>
</dbReference>
<dbReference type="PIRSF" id="PIRSF006188">
    <property type="entry name" value="UCP006188"/>
    <property type="match status" value="1"/>
</dbReference>
<dbReference type="SUPFAM" id="SSF158651">
    <property type="entry name" value="YejL-like"/>
    <property type="match status" value="1"/>
</dbReference>
<evidence type="ECO:0000255" key="1">
    <source>
        <dbReference type="HAMAP-Rule" id="MF_00816"/>
    </source>
</evidence>
<sequence length="75" mass="8231">MPQLSRYSDEHVEQLLSELLSVLEKHKAPTDLSLMVLGNMVTNLINTSVAPAQRQAIANSFARALQSSISEDNAH</sequence>